<protein>
    <recommendedName>
        <fullName evidence="1">Small ribosomal subunit protein bS18</fullName>
    </recommendedName>
    <alternativeName>
        <fullName evidence="2">30S ribosomal protein S18</fullName>
    </alternativeName>
</protein>
<gene>
    <name evidence="1" type="primary">rpsR</name>
    <name type="ordered locus">XfasM23_2051</name>
</gene>
<organism>
    <name type="scientific">Xylella fastidiosa (strain M23)</name>
    <dbReference type="NCBI Taxonomy" id="405441"/>
    <lineage>
        <taxon>Bacteria</taxon>
        <taxon>Pseudomonadati</taxon>
        <taxon>Pseudomonadota</taxon>
        <taxon>Gammaproteobacteria</taxon>
        <taxon>Lysobacterales</taxon>
        <taxon>Lysobacteraceae</taxon>
        <taxon>Xylella</taxon>
    </lineage>
</organism>
<proteinExistence type="inferred from homology"/>
<reference key="1">
    <citation type="journal article" date="2010" name="J. Bacteriol.">
        <title>Whole genome sequences of two Xylella fastidiosa strains (M12 and M23) causing almond leaf scorch disease in California.</title>
        <authorList>
            <person name="Chen J."/>
            <person name="Xie G."/>
            <person name="Han S."/>
            <person name="Chertkov O."/>
            <person name="Sims D."/>
            <person name="Civerolo E.L."/>
        </authorList>
    </citation>
    <scope>NUCLEOTIDE SEQUENCE [LARGE SCALE GENOMIC DNA]</scope>
    <source>
        <strain>M23</strain>
    </source>
</reference>
<comment type="function">
    <text evidence="1">Binds as a heterodimer with protein bS6 to the central domain of the 16S rRNA, where it helps stabilize the platform of the 30S subunit.</text>
</comment>
<comment type="subunit">
    <text evidence="1">Part of the 30S ribosomal subunit. Forms a tight heterodimer with protein bS6.</text>
</comment>
<comment type="similarity">
    <text evidence="1">Belongs to the bacterial ribosomal protein bS18 family.</text>
</comment>
<dbReference type="EMBL" id="CP001011">
    <property type="protein sequence ID" value="ACB93449.1"/>
    <property type="molecule type" value="Genomic_DNA"/>
</dbReference>
<dbReference type="RefSeq" id="WP_004084635.1">
    <property type="nucleotide sequence ID" value="NC_010577.1"/>
</dbReference>
<dbReference type="SMR" id="B2I9S8"/>
<dbReference type="GeneID" id="93905805"/>
<dbReference type="KEGG" id="xfn:XfasM23_2051"/>
<dbReference type="HOGENOM" id="CLU_148710_2_2_6"/>
<dbReference type="Proteomes" id="UP000001698">
    <property type="component" value="Chromosome"/>
</dbReference>
<dbReference type="GO" id="GO:0022627">
    <property type="term" value="C:cytosolic small ribosomal subunit"/>
    <property type="evidence" value="ECO:0007669"/>
    <property type="project" value="TreeGrafter"/>
</dbReference>
<dbReference type="GO" id="GO:0070181">
    <property type="term" value="F:small ribosomal subunit rRNA binding"/>
    <property type="evidence" value="ECO:0007669"/>
    <property type="project" value="TreeGrafter"/>
</dbReference>
<dbReference type="GO" id="GO:0003735">
    <property type="term" value="F:structural constituent of ribosome"/>
    <property type="evidence" value="ECO:0007669"/>
    <property type="project" value="InterPro"/>
</dbReference>
<dbReference type="GO" id="GO:0006412">
    <property type="term" value="P:translation"/>
    <property type="evidence" value="ECO:0007669"/>
    <property type="project" value="UniProtKB-UniRule"/>
</dbReference>
<dbReference type="FunFam" id="4.10.640.10:FF:000001">
    <property type="entry name" value="30S ribosomal protein S18"/>
    <property type="match status" value="1"/>
</dbReference>
<dbReference type="Gene3D" id="4.10.640.10">
    <property type="entry name" value="Ribosomal protein S18"/>
    <property type="match status" value="1"/>
</dbReference>
<dbReference type="HAMAP" id="MF_00270">
    <property type="entry name" value="Ribosomal_bS18"/>
    <property type="match status" value="1"/>
</dbReference>
<dbReference type="InterPro" id="IPR001648">
    <property type="entry name" value="Ribosomal_bS18"/>
</dbReference>
<dbReference type="InterPro" id="IPR018275">
    <property type="entry name" value="Ribosomal_bS18_CS"/>
</dbReference>
<dbReference type="InterPro" id="IPR036870">
    <property type="entry name" value="Ribosomal_bS18_sf"/>
</dbReference>
<dbReference type="NCBIfam" id="TIGR00165">
    <property type="entry name" value="S18"/>
    <property type="match status" value="1"/>
</dbReference>
<dbReference type="PANTHER" id="PTHR13479">
    <property type="entry name" value="30S RIBOSOMAL PROTEIN S18"/>
    <property type="match status" value="1"/>
</dbReference>
<dbReference type="PANTHER" id="PTHR13479:SF40">
    <property type="entry name" value="SMALL RIBOSOMAL SUBUNIT PROTEIN BS18M"/>
    <property type="match status" value="1"/>
</dbReference>
<dbReference type="Pfam" id="PF01084">
    <property type="entry name" value="Ribosomal_S18"/>
    <property type="match status" value="1"/>
</dbReference>
<dbReference type="PRINTS" id="PR00974">
    <property type="entry name" value="RIBOSOMALS18"/>
</dbReference>
<dbReference type="SUPFAM" id="SSF46911">
    <property type="entry name" value="Ribosomal protein S18"/>
    <property type="match status" value="1"/>
</dbReference>
<dbReference type="PROSITE" id="PS00057">
    <property type="entry name" value="RIBOSOMAL_S18"/>
    <property type="match status" value="1"/>
</dbReference>
<sequence>MSKFFRRRKFCKFTAEGIKEIDYKDLNTLRQYLTENGRIVPSRVTGTKSKYQRQLTTAVKLARFLALIPYTDNHDI</sequence>
<accession>B2I9S8</accession>
<name>RS18_XYLF2</name>
<keyword id="KW-0687">Ribonucleoprotein</keyword>
<keyword id="KW-0689">Ribosomal protein</keyword>
<keyword id="KW-0694">RNA-binding</keyword>
<keyword id="KW-0699">rRNA-binding</keyword>
<evidence type="ECO:0000255" key="1">
    <source>
        <dbReference type="HAMAP-Rule" id="MF_00270"/>
    </source>
</evidence>
<evidence type="ECO:0000305" key="2"/>
<feature type="chain" id="PRO_1000114468" description="Small ribosomal subunit protein bS18">
    <location>
        <begin position="1"/>
        <end position="76"/>
    </location>
</feature>